<accession>B1NWH0</accession>
<sequence length="44" mass="5043">MRDLKTYLSVAPVISTLWFGSLAGLLIEINRFFPDALTFPFFSF</sequence>
<feature type="chain" id="PRO_0000354158" description="Photosystem I reaction center subunit IX">
    <location>
        <begin position="1"/>
        <end position="44"/>
    </location>
</feature>
<feature type="transmembrane region" description="Helical" evidence="1">
    <location>
        <begin position="7"/>
        <end position="27"/>
    </location>
</feature>
<name>PSAJ_MANES</name>
<evidence type="ECO:0000255" key="1">
    <source>
        <dbReference type="HAMAP-Rule" id="MF_00522"/>
    </source>
</evidence>
<organism>
    <name type="scientific">Manihot esculenta</name>
    <name type="common">Cassava</name>
    <name type="synonym">Jatropha manihot</name>
    <dbReference type="NCBI Taxonomy" id="3983"/>
    <lineage>
        <taxon>Eukaryota</taxon>
        <taxon>Viridiplantae</taxon>
        <taxon>Streptophyta</taxon>
        <taxon>Embryophyta</taxon>
        <taxon>Tracheophyta</taxon>
        <taxon>Spermatophyta</taxon>
        <taxon>Magnoliopsida</taxon>
        <taxon>eudicotyledons</taxon>
        <taxon>Gunneridae</taxon>
        <taxon>Pentapetalae</taxon>
        <taxon>rosids</taxon>
        <taxon>fabids</taxon>
        <taxon>Malpighiales</taxon>
        <taxon>Euphorbiaceae</taxon>
        <taxon>Crotonoideae</taxon>
        <taxon>Manihoteae</taxon>
        <taxon>Manihot</taxon>
    </lineage>
</organism>
<geneLocation type="chloroplast"/>
<dbReference type="EMBL" id="EU117376">
    <property type="protein sequence ID" value="ABV66174.1"/>
    <property type="molecule type" value="Genomic_DNA"/>
</dbReference>
<dbReference type="RefSeq" id="YP_001718457.1">
    <property type="nucleotide sequence ID" value="NC_010433.1"/>
</dbReference>
<dbReference type="SMR" id="B1NWH0"/>
<dbReference type="GeneID" id="6000014"/>
<dbReference type="KEGG" id="mesc:6000014"/>
<dbReference type="OrthoDB" id="1844838at2759"/>
<dbReference type="GO" id="GO:0009535">
    <property type="term" value="C:chloroplast thylakoid membrane"/>
    <property type="evidence" value="ECO:0007669"/>
    <property type="project" value="UniProtKB-SubCell"/>
</dbReference>
<dbReference type="GO" id="GO:0009522">
    <property type="term" value="C:photosystem I"/>
    <property type="evidence" value="ECO:0007669"/>
    <property type="project" value="UniProtKB-KW"/>
</dbReference>
<dbReference type="GO" id="GO:0015979">
    <property type="term" value="P:photosynthesis"/>
    <property type="evidence" value="ECO:0007669"/>
    <property type="project" value="UniProtKB-UniRule"/>
</dbReference>
<dbReference type="FunFam" id="1.20.5.510:FF:000001">
    <property type="entry name" value="Photosystem I reaction center subunit IX"/>
    <property type="match status" value="1"/>
</dbReference>
<dbReference type="Gene3D" id="1.20.5.510">
    <property type="entry name" value="Single helix bin"/>
    <property type="match status" value="1"/>
</dbReference>
<dbReference type="HAMAP" id="MF_00522">
    <property type="entry name" value="PSI_PsaJ"/>
    <property type="match status" value="1"/>
</dbReference>
<dbReference type="InterPro" id="IPR002615">
    <property type="entry name" value="PSI_PsaJ"/>
</dbReference>
<dbReference type="InterPro" id="IPR036062">
    <property type="entry name" value="PSI_PsaJ_sf"/>
</dbReference>
<dbReference type="PANTHER" id="PTHR36082">
    <property type="match status" value="1"/>
</dbReference>
<dbReference type="PANTHER" id="PTHR36082:SF2">
    <property type="entry name" value="PHOTOSYSTEM I REACTION CENTER SUBUNIT IX"/>
    <property type="match status" value="1"/>
</dbReference>
<dbReference type="Pfam" id="PF01701">
    <property type="entry name" value="PSI_PsaJ"/>
    <property type="match status" value="1"/>
</dbReference>
<dbReference type="SUPFAM" id="SSF81544">
    <property type="entry name" value="Subunit IX of photosystem I reaction centre, PsaJ"/>
    <property type="match status" value="1"/>
</dbReference>
<gene>
    <name evidence="1" type="primary">psaJ</name>
</gene>
<protein>
    <recommendedName>
        <fullName evidence="1">Photosystem I reaction center subunit IX</fullName>
    </recommendedName>
    <alternativeName>
        <fullName evidence="1">PSI-J</fullName>
    </alternativeName>
</protein>
<reference key="1">
    <citation type="journal article" date="2008" name="Theor. Appl. Genet.">
        <title>The complete nucleotide sequence of the cassava (Manihot esculenta) chloroplast genome and the evolution of atpF in Malpighiales: RNA editing and multiple losses of a group II intron.</title>
        <authorList>
            <person name="Daniell H."/>
            <person name="Wurdack K.J."/>
            <person name="Kanagaraj A."/>
            <person name="Lee S.-B."/>
            <person name="Saski C."/>
            <person name="Jansen R.K."/>
        </authorList>
    </citation>
    <scope>NUCLEOTIDE SEQUENCE [LARGE SCALE GENOMIC DNA]</scope>
    <source>
        <strain>cv. TME3</strain>
    </source>
</reference>
<keyword id="KW-0150">Chloroplast</keyword>
<keyword id="KW-0472">Membrane</keyword>
<keyword id="KW-0602">Photosynthesis</keyword>
<keyword id="KW-0603">Photosystem I</keyword>
<keyword id="KW-0934">Plastid</keyword>
<keyword id="KW-0793">Thylakoid</keyword>
<keyword id="KW-0812">Transmembrane</keyword>
<keyword id="KW-1133">Transmembrane helix</keyword>
<proteinExistence type="inferred from homology"/>
<comment type="function">
    <text evidence="1">May help in the organization of the PsaE and PsaF subunits.</text>
</comment>
<comment type="subcellular location">
    <subcellularLocation>
        <location evidence="1">Plastid</location>
        <location evidence="1">Chloroplast thylakoid membrane</location>
        <topology evidence="1">Single-pass membrane protein</topology>
    </subcellularLocation>
</comment>
<comment type="similarity">
    <text evidence="1">Belongs to the PsaJ family.</text>
</comment>